<protein>
    <recommendedName>
        <fullName evidence="1">Glycine--tRNA ligase</fullName>
        <ecNumber evidence="1">6.1.1.14</ecNumber>
    </recommendedName>
    <alternativeName>
        <fullName evidence="1">Glycyl-tRNA synthetase</fullName>
        <shortName evidence="1">GlyRS</shortName>
    </alternativeName>
</protein>
<gene>
    <name evidence="1" type="primary">glyQS</name>
    <name type="ordered locus">TTE0978</name>
</gene>
<sequence length="461" mass="54121">MPVKVTMDKIVALAKNRGFVFPGSEIYGGLANTWDYGPLGVEMKNNIKRIWWKKFIQESPYNVGIDSAILMNREVWVASGHVASFSDPLMDCKECKSRFRADQLIEDYIKEKGLDISIEGWTNEQMMEFIKEHKVPCPKCGAHNFTEIRKFNLMFKTYVGVTEDSKSEVFLRPETAQGIFVNFKNVQRTSRKKIPFGIGQIGKSFRNEITPGNFIFRTREFEQMELEFFCKPGEDMEWFNYWRQFCMDWLVEFGLKRENLRFRDHKKEELSHYSTATTDIEYNFPFGWGELWGIANRTDYDLRQHMEHSGEDMTYTDPVTGEKYIPYCIEPSVGVDRLMLAFLVDAYDEEEVEGETRVVLRLHPAIAPVKVAVFPLSKKLNEAAYKIYLDLKKKFPAEYDESGSIGRRYRRQDEIGTPFCVTYDFDSENDHKVTIRDRDTMEQIRIDIDQVDKYLEEKLKF</sequence>
<reference key="1">
    <citation type="journal article" date="2002" name="Genome Res.">
        <title>A complete sequence of the T. tengcongensis genome.</title>
        <authorList>
            <person name="Bao Q."/>
            <person name="Tian Y."/>
            <person name="Li W."/>
            <person name="Xu Z."/>
            <person name="Xuan Z."/>
            <person name="Hu S."/>
            <person name="Dong W."/>
            <person name="Yang J."/>
            <person name="Chen Y."/>
            <person name="Xue Y."/>
            <person name="Xu Y."/>
            <person name="Lai X."/>
            <person name="Huang L."/>
            <person name="Dong X."/>
            <person name="Ma Y."/>
            <person name="Ling L."/>
            <person name="Tan H."/>
            <person name="Chen R."/>
            <person name="Wang J."/>
            <person name="Yu J."/>
            <person name="Yang H."/>
        </authorList>
    </citation>
    <scope>NUCLEOTIDE SEQUENCE [LARGE SCALE GENOMIC DNA]</scope>
    <source>
        <strain>DSM 15242 / JCM 11007 / NBRC 100824 / MB4</strain>
    </source>
</reference>
<evidence type="ECO:0000255" key="1">
    <source>
        <dbReference type="HAMAP-Rule" id="MF_00253"/>
    </source>
</evidence>
<name>SYG_CALS4</name>
<keyword id="KW-0030">Aminoacyl-tRNA synthetase</keyword>
<keyword id="KW-0067">ATP-binding</keyword>
<keyword id="KW-0963">Cytoplasm</keyword>
<keyword id="KW-0436">Ligase</keyword>
<keyword id="KW-0547">Nucleotide-binding</keyword>
<keyword id="KW-0648">Protein biosynthesis</keyword>
<keyword id="KW-1185">Reference proteome</keyword>
<dbReference type="EC" id="6.1.1.14" evidence="1"/>
<dbReference type="EMBL" id="AE008691">
    <property type="protein sequence ID" value="AAM24233.1"/>
    <property type="molecule type" value="Genomic_DNA"/>
</dbReference>
<dbReference type="RefSeq" id="WP_011025352.1">
    <property type="nucleotide sequence ID" value="NC_003869.1"/>
</dbReference>
<dbReference type="SMR" id="Q8RB46"/>
<dbReference type="STRING" id="273068.TTE0978"/>
<dbReference type="KEGG" id="tte:TTE0978"/>
<dbReference type="eggNOG" id="COG0423">
    <property type="taxonomic scope" value="Bacteria"/>
</dbReference>
<dbReference type="HOGENOM" id="CLU_015515_2_1_9"/>
<dbReference type="OrthoDB" id="9760853at2"/>
<dbReference type="Proteomes" id="UP000000555">
    <property type="component" value="Chromosome"/>
</dbReference>
<dbReference type="GO" id="GO:0005737">
    <property type="term" value="C:cytoplasm"/>
    <property type="evidence" value="ECO:0007669"/>
    <property type="project" value="UniProtKB-SubCell"/>
</dbReference>
<dbReference type="GO" id="GO:0005524">
    <property type="term" value="F:ATP binding"/>
    <property type="evidence" value="ECO:0007669"/>
    <property type="project" value="UniProtKB-UniRule"/>
</dbReference>
<dbReference type="GO" id="GO:0140096">
    <property type="term" value="F:catalytic activity, acting on a protein"/>
    <property type="evidence" value="ECO:0007669"/>
    <property type="project" value="UniProtKB-ARBA"/>
</dbReference>
<dbReference type="GO" id="GO:0004820">
    <property type="term" value="F:glycine-tRNA ligase activity"/>
    <property type="evidence" value="ECO:0000250"/>
    <property type="project" value="UniProtKB"/>
</dbReference>
<dbReference type="GO" id="GO:0046983">
    <property type="term" value="F:protein dimerization activity"/>
    <property type="evidence" value="ECO:0000250"/>
    <property type="project" value="UniProtKB"/>
</dbReference>
<dbReference type="GO" id="GO:0016740">
    <property type="term" value="F:transferase activity"/>
    <property type="evidence" value="ECO:0007669"/>
    <property type="project" value="UniProtKB-ARBA"/>
</dbReference>
<dbReference type="GO" id="GO:0006426">
    <property type="term" value="P:glycyl-tRNA aminoacylation"/>
    <property type="evidence" value="ECO:0007669"/>
    <property type="project" value="UniProtKB-UniRule"/>
</dbReference>
<dbReference type="CDD" id="cd00774">
    <property type="entry name" value="GlyRS-like_core"/>
    <property type="match status" value="1"/>
</dbReference>
<dbReference type="CDD" id="cd00858">
    <property type="entry name" value="GlyRS_anticodon"/>
    <property type="match status" value="1"/>
</dbReference>
<dbReference type="FunFam" id="3.40.50.800:FF:000002">
    <property type="entry name" value="Glycine--tRNA ligase"/>
    <property type="match status" value="1"/>
</dbReference>
<dbReference type="Gene3D" id="3.40.50.800">
    <property type="entry name" value="Anticodon-binding domain"/>
    <property type="match status" value="1"/>
</dbReference>
<dbReference type="Gene3D" id="3.30.930.10">
    <property type="entry name" value="Bira Bifunctional Protein, Domain 2"/>
    <property type="match status" value="1"/>
</dbReference>
<dbReference type="HAMAP" id="MF_00253_B">
    <property type="entry name" value="Gly_tRNA_synth_B"/>
    <property type="match status" value="1"/>
</dbReference>
<dbReference type="InterPro" id="IPR002314">
    <property type="entry name" value="aa-tRNA-synt_IIb"/>
</dbReference>
<dbReference type="InterPro" id="IPR006195">
    <property type="entry name" value="aa-tRNA-synth_II"/>
</dbReference>
<dbReference type="InterPro" id="IPR045864">
    <property type="entry name" value="aa-tRNA-synth_II/BPL/LPL"/>
</dbReference>
<dbReference type="InterPro" id="IPR004154">
    <property type="entry name" value="Anticodon-bd"/>
</dbReference>
<dbReference type="InterPro" id="IPR036621">
    <property type="entry name" value="Anticodon-bd_dom_sf"/>
</dbReference>
<dbReference type="InterPro" id="IPR027031">
    <property type="entry name" value="Gly-tRNA_synthase/POLG2"/>
</dbReference>
<dbReference type="InterPro" id="IPR022961">
    <property type="entry name" value="Gly_tRNA_ligase_bac"/>
</dbReference>
<dbReference type="InterPro" id="IPR033731">
    <property type="entry name" value="GlyRS-like_core"/>
</dbReference>
<dbReference type="InterPro" id="IPR002315">
    <property type="entry name" value="tRNA-synt_gly"/>
</dbReference>
<dbReference type="NCBIfam" id="TIGR00389">
    <property type="entry name" value="glyS_dimeric"/>
    <property type="match status" value="1"/>
</dbReference>
<dbReference type="NCBIfam" id="NF003211">
    <property type="entry name" value="PRK04173.1"/>
    <property type="match status" value="1"/>
</dbReference>
<dbReference type="PANTHER" id="PTHR10745:SF8">
    <property type="entry name" value="DNA POLYMERASE SUBUNIT GAMMA-2, MITOCHONDRIAL"/>
    <property type="match status" value="1"/>
</dbReference>
<dbReference type="PANTHER" id="PTHR10745">
    <property type="entry name" value="GLYCYL-TRNA SYNTHETASE/DNA POLYMERASE SUBUNIT GAMMA-2"/>
    <property type="match status" value="1"/>
</dbReference>
<dbReference type="Pfam" id="PF03129">
    <property type="entry name" value="HGTP_anticodon"/>
    <property type="match status" value="1"/>
</dbReference>
<dbReference type="Pfam" id="PF00587">
    <property type="entry name" value="tRNA-synt_2b"/>
    <property type="match status" value="1"/>
</dbReference>
<dbReference type="PRINTS" id="PR01043">
    <property type="entry name" value="TRNASYNTHGLY"/>
</dbReference>
<dbReference type="SUPFAM" id="SSF52954">
    <property type="entry name" value="Class II aaRS ABD-related"/>
    <property type="match status" value="1"/>
</dbReference>
<dbReference type="SUPFAM" id="SSF55681">
    <property type="entry name" value="Class II aaRS and biotin synthetases"/>
    <property type="match status" value="1"/>
</dbReference>
<dbReference type="PROSITE" id="PS50862">
    <property type="entry name" value="AA_TRNA_LIGASE_II"/>
    <property type="match status" value="1"/>
</dbReference>
<proteinExistence type="inferred from homology"/>
<accession>Q8RB46</accession>
<feature type="chain" id="PRO_0000072984" description="Glycine--tRNA ligase">
    <location>
        <begin position="1"/>
        <end position="461"/>
    </location>
</feature>
<feature type="binding site" evidence="1">
    <location>
        <position position="100"/>
    </location>
    <ligand>
        <name>substrate</name>
    </ligand>
</feature>
<feature type="binding site" evidence="1">
    <location>
        <position position="174"/>
    </location>
    <ligand>
        <name>substrate</name>
    </ligand>
</feature>
<feature type="binding site" evidence="1">
    <location>
        <begin position="206"/>
        <end position="208"/>
    </location>
    <ligand>
        <name>ATP</name>
        <dbReference type="ChEBI" id="CHEBI:30616"/>
    </ligand>
</feature>
<feature type="binding site" evidence="1">
    <location>
        <begin position="216"/>
        <end position="221"/>
    </location>
    <ligand>
        <name>ATP</name>
        <dbReference type="ChEBI" id="CHEBI:30616"/>
    </ligand>
</feature>
<feature type="binding site" evidence="1">
    <location>
        <begin position="221"/>
        <end position="225"/>
    </location>
    <ligand>
        <name>substrate</name>
    </ligand>
</feature>
<feature type="binding site" evidence="1">
    <location>
        <begin position="290"/>
        <end position="291"/>
    </location>
    <ligand>
        <name>ATP</name>
        <dbReference type="ChEBI" id="CHEBI:30616"/>
    </ligand>
</feature>
<feature type="binding site" evidence="1">
    <location>
        <begin position="330"/>
        <end position="334"/>
    </location>
    <ligand>
        <name>substrate</name>
    </ligand>
</feature>
<feature type="binding site" evidence="1">
    <location>
        <begin position="334"/>
        <end position="337"/>
    </location>
    <ligand>
        <name>ATP</name>
        <dbReference type="ChEBI" id="CHEBI:30616"/>
    </ligand>
</feature>
<comment type="function">
    <text evidence="1">Catalyzes the attachment of glycine to tRNA(Gly).</text>
</comment>
<comment type="catalytic activity">
    <reaction evidence="1">
        <text>tRNA(Gly) + glycine + ATP = glycyl-tRNA(Gly) + AMP + diphosphate</text>
        <dbReference type="Rhea" id="RHEA:16013"/>
        <dbReference type="Rhea" id="RHEA-COMP:9664"/>
        <dbReference type="Rhea" id="RHEA-COMP:9683"/>
        <dbReference type="ChEBI" id="CHEBI:30616"/>
        <dbReference type="ChEBI" id="CHEBI:33019"/>
        <dbReference type="ChEBI" id="CHEBI:57305"/>
        <dbReference type="ChEBI" id="CHEBI:78442"/>
        <dbReference type="ChEBI" id="CHEBI:78522"/>
        <dbReference type="ChEBI" id="CHEBI:456215"/>
        <dbReference type="EC" id="6.1.1.14"/>
    </reaction>
</comment>
<comment type="subunit">
    <text evidence="1">Homodimer.</text>
</comment>
<comment type="subcellular location">
    <subcellularLocation>
        <location evidence="1">Cytoplasm</location>
    </subcellularLocation>
</comment>
<comment type="similarity">
    <text evidence="1">Belongs to the class-II aminoacyl-tRNA synthetase family.</text>
</comment>
<organism>
    <name type="scientific">Caldanaerobacter subterraneus subsp. tengcongensis (strain DSM 15242 / JCM 11007 / NBRC 100824 / MB4)</name>
    <name type="common">Thermoanaerobacter tengcongensis</name>
    <dbReference type="NCBI Taxonomy" id="273068"/>
    <lineage>
        <taxon>Bacteria</taxon>
        <taxon>Bacillati</taxon>
        <taxon>Bacillota</taxon>
        <taxon>Clostridia</taxon>
        <taxon>Thermoanaerobacterales</taxon>
        <taxon>Thermoanaerobacteraceae</taxon>
        <taxon>Caldanaerobacter</taxon>
    </lineage>
</organism>